<sequence length="189" mass="20555">MPKTRRRPRRSQRKRPPTPWPTSQGLDRVFFSDTQSTCLETVYKATGAPSLGDYVRPAYIVTPYWPPVQSIRSPGTPSMDALSAQLYSSLSLDSPPSPPREPLRPLRSLPRQSLIQPPTFHPPSSRPCANTPPSEMDTWNPPLGSTSQPCLFQTPDSGPKTCTPSGEAPLSACTSTSFPPPSPGPSCPM</sequence>
<keyword id="KW-0002">3D-structure</keyword>
<keyword id="KW-0025">Alternative splicing</keyword>
<keyword id="KW-1035">Host cytoplasm</keyword>
<keyword id="KW-1048">Host nucleus</keyword>
<keyword id="KW-0945">Host-virus interaction</keyword>
<keyword id="KW-0509">mRNA transport</keyword>
<keyword id="KW-0597">Phosphoprotein</keyword>
<keyword id="KW-1185">Reference proteome</keyword>
<keyword id="KW-0694">RNA-binding</keyword>
<keyword id="KW-0813">Transport</keyword>
<evidence type="ECO:0000250" key="1"/>
<evidence type="ECO:0000256" key="2">
    <source>
        <dbReference type="SAM" id="MobiDB-lite"/>
    </source>
</evidence>
<evidence type="ECO:0000269" key="3">
    <source>
    </source>
</evidence>
<evidence type="ECO:0000305" key="4"/>
<evidence type="ECO:0007829" key="5">
    <source>
        <dbReference type="PDB" id="1EXY"/>
    </source>
</evidence>
<comment type="function">
    <text evidence="1">Rex escorts unspliced gag-pro-pol and singly spliced env mRNAs out of the nucleus of infected cells. These mRNAs carry a recognition sequence called Rex responsive element (RxRE or XRE) located at the 3' region of the long terminal repeat (LTR). This function is essential since most HTLV proteins are translated from unspliced or partially spliced pre-mRNAs that cannot exit the nucleus by the pathway used by fully processed cellular mRNAs. Rex itself is translated from a fully spliced mRNA that probably readily exits the nucleus. Rex's nuclear localization signal (NLS) binds directly to KPNB1/importin beta-1 without previous binding to KPNA1/importin alpha-1. KPNB1 binds to the GDP bound form of RAN (Ran-GDP) and targets Rex to the nucleus. In the nucleus, the conversion from Ran-GDP to Ran-GTP dissociates Rex from KPNB1 and allows Rex's binding to the RRE in viral pre-mRNAs. Rex multimerizes on the RRE via cooperative assembly. This multimerization is critical for its full biological activity, since it may shield the viral RNA from being spliced or down-regulated, and probably exposes Rex's nuclear export signal (NES) to the surface. Rex can then form a complex with XPO1/CRM1, RANBP3 and Ran-GTP, leading to nuclear export of the complex. Conversion from Ran-GTP to Ran-GDP mediates dissociation of the Rex/RRE/XPO1/RANBP3/RAN complex, so that Rex can return to the nucleus for a subsequent round of export (By similarity).</text>
</comment>
<comment type="subunit">
    <text evidence="1 3">Homomultimer. Multimeric assembly is essential for activity and involves XPO1. Binds to human XPO1 and KPNB1 (By similarity). Interacts (via N-terminal nuclear localization signal) with human NPM1.</text>
</comment>
<comment type="interaction">
    <interactant intactId="EBI-9675596">
        <id>P0C206</id>
    </interactant>
    <interactant intactId="EBI-711810">
        <id>O14503</id>
        <label>BHLHE40</label>
    </interactant>
    <organismsDiffer>true</organismsDiffer>
    <experiments>3</experiments>
</comment>
<comment type="interaction">
    <interactant intactId="EBI-9675596">
        <id>P0C206</id>
    </interactant>
    <interactant intactId="EBI-742371">
        <id>Q96FJ2</id>
        <label>DYNLL2</label>
    </interactant>
    <organismsDiffer>true</organismsDiffer>
    <experiments>4</experiments>
</comment>
<comment type="interaction">
    <interactant intactId="EBI-9675596">
        <id>P0C206</id>
    </interactant>
    <interactant intactId="EBI-2340947">
        <id>Q8N448</id>
        <label>LNX2</label>
    </interactant>
    <organismsDiffer>true</organismsDiffer>
    <experiments>4</experiments>
</comment>
<comment type="interaction">
    <interactant intactId="EBI-9675596">
        <id>P0C206</id>
    </interactant>
    <interactant intactId="EBI-741037">
        <id>Q9BRK4</id>
        <label>LZTS2</label>
    </interactant>
    <organismsDiffer>true</organismsDiffer>
    <experiments>4</experiments>
</comment>
<comment type="interaction">
    <interactant intactId="EBI-9675596">
        <id>P0C206</id>
    </interactant>
    <interactant intactId="EBI-8656864">
        <id>Q6PF05</id>
        <label>TTC23L</label>
    </interactant>
    <organismsDiffer>true</organismsDiffer>
    <experiments>3</experiments>
</comment>
<comment type="subcellular location">
    <molecule>Isoform Rex</molecule>
    <subcellularLocation>
        <location evidence="1">Host nucleus</location>
        <location evidence="1">Host nucleolus</location>
    </subcellularLocation>
    <subcellularLocation>
        <location evidence="1">Host cytoplasm</location>
    </subcellularLocation>
    <text evidence="1">The presence of both nuclear import and nuclear export signals leads to continuous shuttling between the nucleus and cytoplasm.</text>
</comment>
<comment type="subcellular location">
    <molecule>Isoform p21Rex</molecule>
    <subcellularLocation>
        <location evidence="4">Host cytoplasm</location>
    </subcellularLocation>
</comment>
<comment type="alternative products">
    <event type="alternative splicing"/>
    <isoform>
        <id>P0C206-1</id>
        <name>Rex</name>
        <name>p27Rex</name>
        <sequence type="displayed"/>
    </isoform>
    <isoform>
        <id>P0C206-2</id>
        <name>p21Rex</name>
        <name>p21</name>
        <sequence type="described" ref="VSP_021540"/>
    </isoform>
</comment>
<comment type="induction">
    <text>Down-regulated by P30II.</text>
</comment>
<comment type="domain">
    <text evidence="1">The RNA-binding motif binds to the RxRE, a complex secondary structure consisting of four stem loops and a long stretch of stem structure, present in incompletely spliced viral pre-mRNAs. This region also contains the NLS which mediates nuclear localization. These overlapping functions prevent Rex bound to RxRE from undesirable return to the nucleus. When Rex binds the RxRE, the NLS becomes masked while the NES remains accessible. The leucine-rich NES mediates binding to human XPO1 (By similarity).</text>
</comment>
<comment type="PTM">
    <text evidence="1">Phosphorylated.</text>
</comment>
<comment type="miscellaneous">
    <text>HTLV-1 lineages are divided in four clades, A (Cosmopolitan), B (Central African group), C (Melanesian group) and D (New Central African group).</text>
</comment>
<comment type="similarity">
    <text evidence="4">Belongs to the deltaretrovirus Rex protein family.</text>
</comment>
<comment type="sequence caution" evidence="4">
    <conflict type="erroneous gene model prediction">
        <sequence resource="EMBL-CDS" id="AAC82584"/>
    </conflict>
</comment>
<feature type="chain" id="PRO_0000259783" description="Protein Rex">
    <location>
        <begin position="1"/>
        <end position="189"/>
    </location>
</feature>
<feature type="region of interest" description="Disordered" evidence="2">
    <location>
        <begin position="1"/>
        <end position="27"/>
    </location>
</feature>
<feature type="region of interest" description="Homomultimerization" evidence="1">
    <location>
        <begin position="56"/>
        <end position="70"/>
    </location>
</feature>
<feature type="region of interest" description="Disordered" evidence="2">
    <location>
        <begin position="87"/>
        <end position="189"/>
    </location>
</feature>
<feature type="region of interest" description="Homomultimerization" evidence="1">
    <location>
        <begin position="123"/>
        <end position="131"/>
    </location>
</feature>
<feature type="short sequence motif" description="Nuclear localization signal, and RNA-binding (RxRE)" evidence="1">
    <location>
        <begin position="2"/>
        <end position="18"/>
    </location>
</feature>
<feature type="short sequence motif" description="Nuclear export signal" evidence="1">
    <location>
        <begin position="82"/>
        <end position="93"/>
    </location>
</feature>
<feature type="compositionally biased region" description="Basic residues" evidence="2">
    <location>
        <begin position="1"/>
        <end position="16"/>
    </location>
</feature>
<feature type="compositionally biased region" description="Low complexity" evidence="2">
    <location>
        <begin position="105"/>
        <end position="114"/>
    </location>
</feature>
<feature type="compositionally biased region" description="Polar residues" evidence="2">
    <location>
        <begin position="143"/>
        <end position="164"/>
    </location>
</feature>
<feature type="compositionally biased region" description="Pro residues" evidence="2">
    <location>
        <begin position="178"/>
        <end position="189"/>
    </location>
</feature>
<feature type="modified residue" description="Phosphoserine; by host" evidence="1">
    <location>
        <position position="70"/>
    </location>
</feature>
<feature type="modified residue" description="Phosphothreonine; by host" evidence="1">
    <location>
        <position position="174"/>
    </location>
</feature>
<feature type="modified residue" description="Phosphoserine; by host" evidence="1">
    <location>
        <position position="177"/>
    </location>
</feature>
<feature type="splice variant" id="VSP_021540" description="In isoform p21Rex." evidence="4">
    <location>
        <begin position="1"/>
        <end position="78"/>
    </location>
</feature>
<feature type="helix" evidence="5">
    <location>
        <begin position="10"/>
        <end position="12"/>
    </location>
</feature>
<organism>
    <name type="scientific">Human T-cell leukemia virus 1 (isolate Caribbea HS-35 subtype A)</name>
    <name type="common">HTLV-1</name>
    <dbReference type="NCBI Taxonomy" id="11927"/>
    <lineage>
        <taxon>Viruses</taxon>
        <taxon>Riboviria</taxon>
        <taxon>Pararnavirae</taxon>
        <taxon>Artverviricota</taxon>
        <taxon>Revtraviricetes</taxon>
        <taxon>Ortervirales</taxon>
        <taxon>Retroviridae</taxon>
        <taxon>Orthoretrovirinae</taxon>
        <taxon>Deltaretrovirus</taxon>
        <taxon>Primate T-lymphotropic virus 1</taxon>
    </lineage>
</organism>
<organismHost>
    <name type="scientific">Homo sapiens</name>
    <name type="common">Human</name>
    <dbReference type="NCBI Taxonomy" id="9606"/>
</organismHost>
<accession>P0C206</accession>
<accession>O56230</accession>
<proteinExistence type="evidence at protein level"/>
<name>REX_HTL1C</name>
<protein>
    <recommendedName>
        <fullName>Protein Rex</fullName>
    </recommendedName>
    <alternativeName>
        <fullName>Rev homolog</fullName>
    </alternativeName>
    <alternativeName>
        <fullName>Rex-1</fullName>
    </alternativeName>
    <alternativeName>
        <fullName>p27Rex</fullName>
    </alternativeName>
</protein>
<dbReference type="EMBL" id="D13784">
    <property type="status" value="NOT_ANNOTATED_CDS"/>
    <property type="molecule type" value="Genomic_DNA"/>
</dbReference>
<dbReference type="EMBL" id="AF033817">
    <property type="protein sequence ID" value="AAC82584.1"/>
    <property type="status" value="ALT_SEQ"/>
    <property type="molecule type" value="Genomic_DNA"/>
</dbReference>
<dbReference type="RefSeq" id="NP_057863.1">
    <property type="nucleotide sequence ID" value="NC_001436.1"/>
</dbReference>
<dbReference type="PDB" id="1EXY">
    <property type="method" value="NMR"/>
    <property type="chains" value="B=1-16"/>
</dbReference>
<dbReference type="PDBsum" id="1EXY"/>
<dbReference type="SMR" id="P0C206"/>
<dbReference type="IntAct" id="P0C206">
    <property type="interactions" value="18"/>
</dbReference>
<dbReference type="MINT" id="P0C206"/>
<dbReference type="iPTMnet" id="P0C206"/>
<dbReference type="GeneID" id="1491937"/>
<dbReference type="KEGG" id="vg:1491937"/>
<dbReference type="EvolutionaryTrace" id="P0C206"/>
<dbReference type="Proteomes" id="UP000001061">
    <property type="component" value="Segment"/>
</dbReference>
<dbReference type="Proteomes" id="UP000110593">
    <property type="component" value="Genome"/>
</dbReference>
<dbReference type="GO" id="GO:0030430">
    <property type="term" value="C:host cell cytoplasm"/>
    <property type="evidence" value="ECO:0007669"/>
    <property type="project" value="UniProtKB-SubCell"/>
</dbReference>
<dbReference type="GO" id="GO:0044196">
    <property type="term" value="C:host cell nucleolus"/>
    <property type="evidence" value="ECO:0007669"/>
    <property type="project" value="UniProtKB-SubCell"/>
</dbReference>
<dbReference type="GO" id="GO:0003723">
    <property type="term" value="F:RNA binding"/>
    <property type="evidence" value="ECO:0007669"/>
    <property type="project" value="UniProtKB-KW"/>
</dbReference>
<dbReference type="GO" id="GO:0051028">
    <property type="term" value="P:mRNA transport"/>
    <property type="evidence" value="ECO:0007669"/>
    <property type="project" value="UniProtKB-KW"/>
</dbReference>
<reference key="1">
    <citation type="journal article" date="1988" name="J. Gen. Virol.">
        <title>Molecular cloning and complete nucleotide sequence of an adult T cell leukaemia virus/human T cell leukaemia virus type I (ATLV/HTLV-I) isolate of Caribbean origin: relationship to other members of the ATLV/HTLV-I subgroup.</title>
        <authorList>
            <person name="Malik K.T.A."/>
            <person name="Even J."/>
            <person name="Karpas A."/>
        </authorList>
    </citation>
    <scope>NUCLEOTIDE SEQUENCE [GENOMIC DNA]</scope>
</reference>
<reference key="2">
    <citation type="submission" date="1997-11" db="EMBL/GenBank/DDBJ databases">
        <authorList>
            <person name="Chappey C."/>
        </authorList>
    </citation>
    <scope>NUCLEOTIDE SEQUENCE [GENOMIC DNA]</scope>
</reference>
<reference key="3">
    <citation type="journal article" date="1993" name="J. Biol. Chem.">
        <title>Nucleolar targeting signal of Rex protein of human T-cell leukemia virus type I specifically binds to nucleolar shuttle protein B-23.</title>
        <authorList>
            <person name="Adachi Y."/>
            <person name="Copeland T.D."/>
            <person name="Hatanaka M."/>
            <person name="Oroszlan S."/>
        </authorList>
    </citation>
    <scope>INTERACTION WITH HUMAN NPM1</scope>
</reference>
<reference key="4">
    <citation type="journal article" date="2005" name="Front. Biosci.">
        <title>The human T-cell leukemia virus Rex protein.</title>
        <authorList>
            <person name="Younis I."/>
            <person name="Green P.L."/>
        </authorList>
    </citation>
    <scope>REVIEW</scope>
</reference>
<reference key="5">
    <citation type="journal article" date="2005" name="Oncogene">
        <title>Transcriptional and post-transcriptional gene regulation of HTLV-1.</title>
        <authorList>
            <person name="Kashanchi F."/>
            <person name="Brady J.N."/>
        </authorList>
    </citation>
    <scope>REVIEW</scope>
</reference>